<evidence type="ECO:0000255" key="1">
    <source>
        <dbReference type="PROSITE-ProRule" id="PRU00625"/>
    </source>
</evidence>
<evidence type="ECO:0000256" key="2">
    <source>
        <dbReference type="SAM" id="MobiDB-lite"/>
    </source>
</evidence>
<evidence type="ECO:0000305" key="3"/>
<organism>
    <name type="scientific">Arabidopsis thaliana</name>
    <name type="common">Mouse-ear cress</name>
    <dbReference type="NCBI Taxonomy" id="3702"/>
    <lineage>
        <taxon>Eukaryota</taxon>
        <taxon>Viridiplantae</taxon>
        <taxon>Streptophyta</taxon>
        <taxon>Embryophyta</taxon>
        <taxon>Tracheophyta</taxon>
        <taxon>Spermatophyta</taxon>
        <taxon>Magnoliopsida</taxon>
        <taxon>eudicotyledons</taxon>
        <taxon>Gunneridae</taxon>
        <taxon>Pentapetalae</taxon>
        <taxon>rosids</taxon>
        <taxon>malvids</taxon>
        <taxon>Brassicales</taxon>
        <taxon>Brassicaceae</taxon>
        <taxon>Camelineae</taxon>
        <taxon>Arabidopsis</taxon>
    </lineage>
</organism>
<accession>Q700D9</accession>
<accession>Q9MA23</accession>
<protein>
    <recommendedName>
        <fullName>Putative Myb family transcription factor At1g14600</fullName>
    </recommendedName>
</protein>
<gene>
    <name type="ordered locus">At1g14600</name>
    <name type="ORF">T5E21.10</name>
</gene>
<keyword id="KW-0010">Activator</keyword>
<keyword id="KW-0238">DNA-binding</keyword>
<keyword id="KW-0539">Nucleus</keyword>
<keyword id="KW-1185">Reference proteome</keyword>
<keyword id="KW-0804">Transcription</keyword>
<keyword id="KW-0805">Transcription regulation</keyword>
<reference key="1">
    <citation type="journal article" date="2000" name="Nature">
        <title>Sequence and analysis of chromosome 1 of the plant Arabidopsis thaliana.</title>
        <authorList>
            <person name="Theologis A."/>
            <person name="Ecker J.R."/>
            <person name="Palm C.J."/>
            <person name="Federspiel N.A."/>
            <person name="Kaul S."/>
            <person name="White O."/>
            <person name="Alonso J."/>
            <person name="Altafi H."/>
            <person name="Araujo R."/>
            <person name="Bowman C.L."/>
            <person name="Brooks S.Y."/>
            <person name="Buehler E."/>
            <person name="Chan A."/>
            <person name="Chao Q."/>
            <person name="Chen H."/>
            <person name="Cheuk R.F."/>
            <person name="Chin C.W."/>
            <person name="Chung M.K."/>
            <person name="Conn L."/>
            <person name="Conway A.B."/>
            <person name="Conway A.R."/>
            <person name="Creasy T.H."/>
            <person name="Dewar K."/>
            <person name="Dunn P."/>
            <person name="Etgu P."/>
            <person name="Feldblyum T.V."/>
            <person name="Feng J.-D."/>
            <person name="Fong B."/>
            <person name="Fujii C.Y."/>
            <person name="Gill J.E."/>
            <person name="Goldsmith A.D."/>
            <person name="Haas B."/>
            <person name="Hansen N.F."/>
            <person name="Hughes B."/>
            <person name="Huizar L."/>
            <person name="Hunter J.L."/>
            <person name="Jenkins J."/>
            <person name="Johnson-Hopson C."/>
            <person name="Khan S."/>
            <person name="Khaykin E."/>
            <person name="Kim C.J."/>
            <person name="Koo H.L."/>
            <person name="Kremenetskaia I."/>
            <person name="Kurtz D.B."/>
            <person name="Kwan A."/>
            <person name="Lam B."/>
            <person name="Langin-Hooper S."/>
            <person name="Lee A."/>
            <person name="Lee J.M."/>
            <person name="Lenz C.A."/>
            <person name="Li J.H."/>
            <person name="Li Y.-P."/>
            <person name="Lin X."/>
            <person name="Liu S.X."/>
            <person name="Liu Z.A."/>
            <person name="Luros J.S."/>
            <person name="Maiti R."/>
            <person name="Marziali A."/>
            <person name="Militscher J."/>
            <person name="Miranda M."/>
            <person name="Nguyen M."/>
            <person name="Nierman W.C."/>
            <person name="Osborne B.I."/>
            <person name="Pai G."/>
            <person name="Peterson J."/>
            <person name="Pham P.K."/>
            <person name="Rizzo M."/>
            <person name="Rooney T."/>
            <person name="Rowley D."/>
            <person name="Sakano H."/>
            <person name="Salzberg S.L."/>
            <person name="Schwartz J.R."/>
            <person name="Shinn P."/>
            <person name="Southwick A.M."/>
            <person name="Sun H."/>
            <person name="Tallon L.J."/>
            <person name="Tambunga G."/>
            <person name="Toriumi M.J."/>
            <person name="Town C.D."/>
            <person name="Utterback T."/>
            <person name="Van Aken S."/>
            <person name="Vaysberg M."/>
            <person name="Vysotskaia V.S."/>
            <person name="Walker M."/>
            <person name="Wu D."/>
            <person name="Yu G."/>
            <person name="Fraser C.M."/>
            <person name="Venter J.C."/>
            <person name="Davis R.W."/>
        </authorList>
    </citation>
    <scope>NUCLEOTIDE SEQUENCE [LARGE SCALE GENOMIC DNA]</scope>
    <source>
        <strain>cv. Columbia</strain>
    </source>
</reference>
<reference key="2">
    <citation type="journal article" date="2017" name="Plant J.">
        <title>Araport11: a complete reannotation of the Arabidopsis thaliana reference genome.</title>
        <authorList>
            <person name="Cheng C.Y."/>
            <person name="Krishnakumar V."/>
            <person name="Chan A.P."/>
            <person name="Thibaud-Nissen F."/>
            <person name="Schobel S."/>
            <person name="Town C.D."/>
        </authorList>
    </citation>
    <scope>GENOME REANNOTATION</scope>
    <source>
        <strain>cv. Columbia</strain>
    </source>
</reference>
<reference key="3">
    <citation type="journal article" date="2004" name="Plant Physiol.">
        <title>Genome-wide ORFeome cloning and analysis of Arabidopsis transcription factor genes.</title>
        <authorList>
            <person name="Gong W."/>
            <person name="Shen Y.-P."/>
            <person name="Ma L.-G."/>
            <person name="Pan Y."/>
            <person name="Du Y.-L."/>
            <person name="Wang D.-H."/>
            <person name="Yang J.-Y."/>
            <person name="Hu L.-D."/>
            <person name="Liu X.-F."/>
            <person name="Dong C.-X."/>
            <person name="Ma L."/>
            <person name="Chen Y.-H."/>
            <person name="Yang X.-Y."/>
            <person name="Gao Y."/>
            <person name="Zhu D."/>
            <person name="Tan X."/>
            <person name="Mu J.-Y."/>
            <person name="Zhang D.-B."/>
            <person name="Liu Y.-L."/>
            <person name="Dinesh-Kumar S.P."/>
            <person name="Li Y."/>
            <person name="Wang X.-P."/>
            <person name="Gu H.-Y."/>
            <person name="Qu L.-J."/>
            <person name="Bai S.-N."/>
            <person name="Lu Y.-T."/>
            <person name="Li J.-Y."/>
            <person name="Zhao J.-D."/>
            <person name="Zuo J."/>
            <person name="Huang H."/>
            <person name="Deng X.-W."/>
            <person name="Zhu Y.-X."/>
        </authorList>
    </citation>
    <scope>NUCLEOTIDE SEQUENCE [LARGE SCALE MRNA]</scope>
    <source>
        <strain>cv. Columbia</strain>
    </source>
</reference>
<sequence>MGRCGRSNDGVIGGVRPYVRSPVPRLRWTPELHRSFVHAVDLLGGQYKATPKLVLKIMDVKGLTISHVKSHLQMYRGSRITLLGKPEESSSPSSRRRRRQDNEEDHLHDNLSVHARNDCLLGFHSFNFREQTSATDNDDDDFLNIMNMERTKTFAGNGESIKFQSHHSLEAENTKNIWKNTWRENEHEEEEELSLSLSLNHPHNHQQRWKSNASSSLSETSEAVSSSSGPFIFRDCFASSKIDLNLNLSFSLLHS</sequence>
<dbReference type="EMBL" id="AC010657">
    <property type="protein sequence ID" value="AAF63176.1"/>
    <property type="status" value="ALT_SEQ"/>
    <property type="molecule type" value="Genomic_DNA"/>
</dbReference>
<dbReference type="EMBL" id="CP002684">
    <property type="protein sequence ID" value="AEE29189.1"/>
    <property type="molecule type" value="Genomic_DNA"/>
</dbReference>
<dbReference type="EMBL" id="AJ630486">
    <property type="protein sequence ID" value="CAG25859.1"/>
    <property type="molecule type" value="mRNA"/>
</dbReference>
<dbReference type="EMBL" id="AY568658">
    <property type="protein sequence ID" value="AAS79548.1"/>
    <property type="molecule type" value="mRNA"/>
</dbReference>
<dbReference type="RefSeq" id="NP_172912.3">
    <property type="nucleotide sequence ID" value="NM_101327.5"/>
</dbReference>
<dbReference type="SMR" id="Q700D9"/>
<dbReference type="FunCoup" id="Q700D9">
    <property type="interactions" value="6"/>
</dbReference>
<dbReference type="STRING" id="3702.Q700D9"/>
<dbReference type="PaxDb" id="3702-AT1G14600.1"/>
<dbReference type="EnsemblPlants" id="AT1G14600.1">
    <property type="protein sequence ID" value="AT1G14600.1"/>
    <property type="gene ID" value="AT1G14600"/>
</dbReference>
<dbReference type="GeneID" id="838022"/>
<dbReference type="Gramene" id="AT1G14600.1">
    <property type="protein sequence ID" value="AT1G14600.1"/>
    <property type="gene ID" value="AT1G14600"/>
</dbReference>
<dbReference type="KEGG" id="ath:AT1G14600"/>
<dbReference type="Araport" id="AT1G14600"/>
<dbReference type="TAIR" id="AT1G14600"/>
<dbReference type="eggNOG" id="ENOG502RM8S">
    <property type="taxonomic scope" value="Eukaryota"/>
</dbReference>
<dbReference type="HOGENOM" id="CLU_101148_0_0_1"/>
<dbReference type="InParanoid" id="Q700D9"/>
<dbReference type="OMA" id="FIFRDCF"/>
<dbReference type="PRO" id="PR:Q700D9"/>
<dbReference type="Proteomes" id="UP000006548">
    <property type="component" value="Chromosome 1"/>
</dbReference>
<dbReference type="ExpressionAtlas" id="Q700D9">
    <property type="expression patterns" value="baseline and differential"/>
</dbReference>
<dbReference type="GO" id="GO:0005634">
    <property type="term" value="C:nucleus"/>
    <property type="evidence" value="ECO:0007669"/>
    <property type="project" value="UniProtKB-SubCell"/>
</dbReference>
<dbReference type="GO" id="GO:0003677">
    <property type="term" value="F:DNA binding"/>
    <property type="evidence" value="ECO:0007669"/>
    <property type="project" value="UniProtKB-KW"/>
</dbReference>
<dbReference type="GO" id="GO:0003700">
    <property type="term" value="F:DNA-binding transcription factor activity"/>
    <property type="evidence" value="ECO:0000250"/>
    <property type="project" value="TAIR"/>
</dbReference>
<dbReference type="GO" id="GO:0006355">
    <property type="term" value="P:regulation of DNA-templated transcription"/>
    <property type="evidence" value="ECO:0000304"/>
    <property type="project" value="TAIR"/>
</dbReference>
<dbReference type="FunFam" id="1.10.10.60:FF:000002">
    <property type="entry name" value="Myb family transcription factor"/>
    <property type="match status" value="1"/>
</dbReference>
<dbReference type="Gene3D" id="1.10.10.60">
    <property type="entry name" value="Homeodomain-like"/>
    <property type="match status" value="1"/>
</dbReference>
<dbReference type="InterPro" id="IPR009057">
    <property type="entry name" value="Homeodomain-like_sf"/>
</dbReference>
<dbReference type="InterPro" id="IPR017930">
    <property type="entry name" value="Myb_dom"/>
</dbReference>
<dbReference type="InterPro" id="IPR006447">
    <property type="entry name" value="Myb_dom_plants"/>
</dbReference>
<dbReference type="InterPro" id="IPR046955">
    <property type="entry name" value="PHR1-like"/>
</dbReference>
<dbReference type="InterPro" id="IPR001005">
    <property type="entry name" value="SANT/Myb"/>
</dbReference>
<dbReference type="NCBIfam" id="TIGR01557">
    <property type="entry name" value="myb_SHAQKYF"/>
    <property type="match status" value="1"/>
</dbReference>
<dbReference type="PANTHER" id="PTHR31314:SF71">
    <property type="entry name" value="HTH MYB-TYPE DOMAIN-CONTAINING PROTEIN"/>
    <property type="match status" value="1"/>
</dbReference>
<dbReference type="PANTHER" id="PTHR31314">
    <property type="entry name" value="MYB FAMILY TRANSCRIPTION FACTOR PHL7-LIKE"/>
    <property type="match status" value="1"/>
</dbReference>
<dbReference type="Pfam" id="PF00249">
    <property type="entry name" value="Myb_DNA-binding"/>
    <property type="match status" value="1"/>
</dbReference>
<dbReference type="SUPFAM" id="SSF46689">
    <property type="entry name" value="Homeodomain-like"/>
    <property type="match status" value="1"/>
</dbReference>
<dbReference type="PROSITE" id="PS51294">
    <property type="entry name" value="HTH_MYB"/>
    <property type="match status" value="1"/>
</dbReference>
<name>MYBF_ARATH</name>
<proteinExistence type="evidence at transcript level"/>
<feature type="chain" id="PRO_0000197150" description="Putative Myb family transcription factor At1g14600">
    <location>
        <begin position="1"/>
        <end position="255"/>
    </location>
</feature>
<feature type="domain" description="HTH myb-type" evidence="1">
    <location>
        <begin position="20"/>
        <end position="80"/>
    </location>
</feature>
<feature type="DNA-binding region" description="H-T-H motif" evidence="1">
    <location>
        <begin position="51"/>
        <end position="76"/>
    </location>
</feature>
<feature type="region of interest" description="Disordered" evidence="2">
    <location>
        <begin position="80"/>
        <end position="110"/>
    </location>
</feature>
<feature type="sequence conflict" description="In Ref. 3; CAG25859/AAS79548." evidence="3" ref="3">
    <original>S</original>
    <variation>P</variation>
    <location>
        <position position="112"/>
    </location>
</feature>
<comment type="function">
    <text>Putative transcription factor.</text>
</comment>
<comment type="subcellular location">
    <subcellularLocation>
        <location evidence="3">Nucleus</location>
    </subcellularLocation>
</comment>
<comment type="sequence caution" evidence="3">
    <conflict type="erroneous gene model prediction">
        <sequence resource="EMBL-CDS" id="AAF63176"/>
    </conflict>
</comment>